<sequence>FNMESDSFEDLWKGEDFSNYSYSSDLPPSLPDVAPCRPESLEINKYFVVIIYALVFLLSLLGNSLVMLVILYSRVGRSVTDVYLLNLALADLLFALTLPIWAASKVNGWIFGTFLCKVVSLLKEVNFYSGILLLACISVDRYLAIVHATRTLTQKRYLVKFICLSIWGLSLLLALPVLLFRRTVYSSNVSPACYEDMGNNTANWRMLLRILPQSFGFIVPLLIMLFCYGFTLRTLFKAHMGQKHRAMRVIFAVVLIFLLCWLPYSLVLLADTLMRTQVIQETCERRNHIDRALDATEILGILHSCLNPLIYAFIGQKFRHGLLKILAIHGLISKDSLPKDSRPSFVGSSSGHT</sequence>
<reference key="1">
    <citation type="journal article" date="1996" name="Immunogenetics">
        <title>Characterization of interleukin-8 receptors in non-human primates.</title>
        <authorList>
            <person name="Alvarez V."/>
            <person name="Coto E."/>
            <person name="Setien F."/>
            <person name="Gonzalez S."/>
            <person name="Gonzalez-Roces S."/>
            <person name="Lopez-Larrea C."/>
        </authorList>
    </citation>
    <scope>NUCLEOTIDE SEQUENCE [GENOMIC DNA]</scope>
</reference>
<feature type="chain" id="PRO_0000069338" description="C-X-C chemokine receptor type 2">
    <location>
        <begin position="1" status="less than"/>
        <end position="353" status="greater than"/>
    </location>
</feature>
<feature type="topological domain" description="Extracellular" evidence="3">
    <location>
        <begin position="1" status="less than"/>
        <end position="45"/>
    </location>
</feature>
<feature type="transmembrane region" description="Helical; Name=1" evidence="3">
    <location>
        <begin position="46"/>
        <end position="72"/>
    </location>
</feature>
<feature type="topological domain" description="Cytoplasmic" evidence="3">
    <location>
        <begin position="73"/>
        <end position="81"/>
    </location>
</feature>
<feature type="transmembrane region" description="Helical; Name=2" evidence="3">
    <location>
        <begin position="82"/>
        <end position="102"/>
    </location>
</feature>
<feature type="topological domain" description="Extracellular" evidence="3">
    <location>
        <begin position="103"/>
        <end position="117"/>
    </location>
</feature>
<feature type="transmembrane region" description="Helical; Name=3" evidence="3">
    <location>
        <begin position="118"/>
        <end position="139"/>
    </location>
</feature>
<feature type="topological domain" description="Cytoplasmic" evidence="3">
    <location>
        <begin position="140"/>
        <end position="160"/>
    </location>
</feature>
<feature type="transmembrane region" description="Helical; Name=4" evidence="3">
    <location>
        <begin position="161"/>
        <end position="180"/>
    </location>
</feature>
<feature type="topological domain" description="Extracellular" evidence="3">
    <location>
        <begin position="181"/>
        <end position="205"/>
    </location>
</feature>
<feature type="transmembrane region" description="Helical; Name=5" evidence="3">
    <location>
        <begin position="206"/>
        <end position="228"/>
    </location>
</feature>
<feature type="topological domain" description="Cytoplasmic" evidence="3">
    <location>
        <begin position="229"/>
        <end position="248"/>
    </location>
</feature>
<feature type="transmembrane region" description="Helical; Name=6" evidence="3">
    <location>
        <begin position="249"/>
        <end position="270"/>
    </location>
</feature>
<feature type="topological domain" description="Extracellular" evidence="3">
    <location>
        <begin position="271"/>
        <end position="291"/>
    </location>
</feature>
<feature type="transmembrane region" description="Helical; Name=7" evidence="3">
    <location>
        <begin position="292"/>
        <end position="312"/>
    </location>
</feature>
<feature type="topological domain" description="Cytoplasmic" evidence="3">
    <location>
        <begin position="313"/>
        <end position="353" status="greater than"/>
    </location>
</feature>
<feature type="glycosylation site" description="N-linked (GlcNAc...) asparagine" evidence="3">
    <location>
        <position position="19"/>
    </location>
</feature>
<feature type="disulfide bond" evidence="4">
    <location>
        <begin position="116"/>
        <end position="193"/>
    </location>
</feature>
<feature type="non-terminal residue">
    <location>
        <position position="1"/>
    </location>
</feature>
<feature type="non-terminal residue">
    <location>
        <position position="353"/>
    </location>
</feature>
<accession>Q28519</accession>
<gene>
    <name type="primary">CXCR2</name>
    <name type="synonym">IL8RB</name>
</gene>
<name>CXCR2_MACMU</name>
<evidence type="ECO:0000250" key="1"/>
<evidence type="ECO:0000250" key="2">
    <source>
        <dbReference type="UniProtKB" id="P25025"/>
    </source>
</evidence>
<evidence type="ECO:0000255" key="3"/>
<evidence type="ECO:0000255" key="4">
    <source>
        <dbReference type="PROSITE-ProRule" id="PRU00521"/>
    </source>
</evidence>
<dbReference type="EMBL" id="X91116">
    <property type="protein sequence ID" value="CAA62565.1"/>
    <property type="molecule type" value="Genomic_DNA"/>
</dbReference>
<dbReference type="SMR" id="Q28519"/>
<dbReference type="FunCoup" id="Q28519">
    <property type="interactions" value="969"/>
</dbReference>
<dbReference type="STRING" id="9544.ENSMMUP00000067534"/>
<dbReference type="GlyCosmos" id="Q28519">
    <property type="glycosylation" value="1 site, No reported glycans"/>
</dbReference>
<dbReference type="PaxDb" id="9544-ENSMMUP00000017601"/>
<dbReference type="eggNOG" id="KOG3656">
    <property type="taxonomic scope" value="Eukaryota"/>
</dbReference>
<dbReference type="InParanoid" id="Q28519"/>
<dbReference type="Proteomes" id="UP000006718">
    <property type="component" value="Unassembled WGS sequence"/>
</dbReference>
<dbReference type="GO" id="GO:0009897">
    <property type="term" value="C:external side of plasma membrane"/>
    <property type="evidence" value="ECO:0000318"/>
    <property type="project" value="GO_Central"/>
</dbReference>
<dbReference type="GO" id="GO:0019957">
    <property type="term" value="F:C-C chemokine binding"/>
    <property type="evidence" value="ECO:0000318"/>
    <property type="project" value="GO_Central"/>
</dbReference>
<dbReference type="GO" id="GO:0016493">
    <property type="term" value="F:C-C chemokine receptor activity"/>
    <property type="evidence" value="ECO:0000318"/>
    <property type="project" value="GO_Central"/>
</dbReference>
<dbReference type="GO" id="GO:0016494">
    <property type="term" value="F:C-X-C chemokine receptor activity"/>
    <property type="evidence" value="ECO:0007669"/>
    <property type="project" value="InterPro"/>
</dbReference>
<dbReference type="GO" id="GO:0019959">
    <property type="term" value="F:interleukin-8 binding"/>
    <property type="evidence" value="ECO:0007669"/>
    <property type="project" value="InterPro"/>
</dbReference>
<dbReference type="GO" id="GO:0019722">
    <property type="term" value="P:calcium-mediated signaling"/>
    <property type="evidence" value="ECO:0000318"/>
    <property type="project" value="GO_Central"/>
</dbReference>
<dbReference type="GO" id="GO:0006955">
    <property type="term" value="P:immune response"/>
    <property type="evidence" value="ECO:0000318"/>
    <property type="project" value="GO_Central"/>
</dbReference>
<dbReference type="GO" id="GO:0030593">
    <property type="term" value="P:neutrophil chemotaxis"/>
    <property type="evidence" value="ECO:0000318"/>
    <property type="project" value="GO_Central"/>
</dbReference>
<dbReference type="GO" id="GO:0007204">
    <property type="term" value="P:positive regulation of cytosolic calcium ion concentration"/>
    <property type="evidence" value="ECO:0000318"/>
    <property type="project" value="GO_Central"/>
</dbReference>
<dbReference type="CDD" id="cd15178">
    <property type="entry name" value="7tmA_CXCR1_2"/>
    <property type="match status" value="1"/>
</dbReference>
<dbReference type="FunFam" id="1.20.1070.10:FF:000157">
    <property type="entry name" value="C-X-C chemokine receptor type 2"/>
    <property type="match status" value="1"/>
</dbReference>
<dbReference type="Gene3D" id="1.20.1070.10">
    <property type="entry name" value="Rhodopsin 7-helix transmembrane proteins"/>
    <property type="match status" value="1"/>
</dbReference>
<dbReference type="InterPro" id="IPR050119">
    <property type="entry name" value="CCR1-9-like"/>
</dbReference>
<dbReference type="InterPro" id="IPR000057">
    <property type="entry name" value="Chemokine_CXCR2"/>
</dbReference>
<dbReference type="InterPro" id="IPR000174">
    <property type="entry name" value="Chemokine_CXCR_1/2"/>
</dbReference>
<dbReference type="InterPro" id="IPR000276">
    <property type="entry name" value="GPCR_Rhodpsn"/>
</dbReference>
<dbReference type="InterPro" id="IPR017452">
    <property type="entry name" value="GPCR_Rhodpsn_7TM"/>
</dbReference>
<dbReference type="PANTHER" id="PTHR10489:SF689">
    <property type="entry name" value="C-X-C CHEMOKINE RECEPTOR TYPE 2"/>
    <property type="match status" value="1"/>
</dbReference>
<dbReference type="PANTHER" id="PTHR10489">
    <property type="entry name" value="CELL ADHESION MOLECULE"/>
    <property type="match status" value="1"/>
</dbReference>
<dbReference type="Pfam" id="PF00001">
    <property type="entry name" value="7tm_1"/>
    <property type="match status" value="1"/>
</dbReference>
<dbReference type="PRINTS" id="PR00237">
    <property type="entry name" value="GPCRRHODOPSN"/>
</dbReference>
<dbReference type="PRINTS" id="PR00427">
    <property type="entry name" value="INTRLEUKIN8R"/>
</dbReference>
<dbReference type="PRINTS" id="PR00573">
    <property type="entry name" value="INTRLEUKN8BR"/>
</dbReference>
<dbReference type="SUPFAM" id="SSF81321">
    <property type="entry name" value="Family A G protein-coupled receptor-like"/>
    <property type="match status" value="1"/>
</dbReference>
<dbReference type="PROSITE" id="PS00237">
    <property type="entry name" value="G_PROTEIN_RECEP_F1_1"/>
    <property type="match status" value="1"/>
</dbReference>
<dbReference type="PROSITE" id="PS50262">
    <property type="entry name" value="G_PROTEIN_RECEP_F1_2"/>
    <property type="match status" value="1"/>
</dbReference>
<comment type="function">
    <text evidence="2">Receptor for interleukin-8 which is a powerful neutrophil chemotactic factor. Binding of IL-8 to the receptor causes activation of neutrophils. This response is mediated via a G-protein that activates a phosphatidylinositol-calcium second messenger system. Binds to IL-8 with high affinity. Also binds with high affinity to CXCL3, GRO/MGSA and NAP-2.</text>
</comment>
<comment type="subunit">
    <text evidence="2">Interacts with IL8. Interacts with GNAI2.</text>
</comment>
<comment type="subcellular location">
    <subcellularLocation>
        <location>Cell membrane</location>
        <topology>Multi-pass membrane protein</topology>
    </subcellularLocation>
</comment>
<comment type="PTM">
    <text evidence="1">Phosphorylated upon ligand binding; which is required for desensitization.</text>
</comment>
<comment type="similarity">
    <text evidence="4">Belongs to the G-protein coupled receptor 1 family.</text>
</comment>
<proteinExistence type="inferred from homology"/>
<protein>
    <recommendedName>
        <fullName>C-X-C chemokine receptor type 2</fullName>
        <shortName>CXC-R2</shortName>
        <shortName>CXCR-2</shortName>
    </recommendedName>
    <alternativeName>
        <fullName>High affinity interleukin-8 receptor B</fullName>
        <shortName>IL-8R B</shortName>
    </alternativeName>
    <cdAntigenName>CD182</cdAntigenName>
</protein>
<keyword id="KW-1003">Cell membrane</keyword>
<keyword id="KW-0145">Chemotaxis</keyword>
<keyword id="KW-1015">Disulfide bond</keyword>
<keyword id="KW-0297">G-protein coupled receptor</keyword>
<keyword id="KW-0325">Glycoprotein</keyword>
<keyword id="KW-0472">Membrane</keyword>
<keyword id="KW-0597">Phosphoprotein</keyword>
<keyword id="KW-0675">Receptor</keyword>
<keyword id="KW-1185">Reference proteome</keyword>
<keyword id="KW-0807">Transducer</keyword>
<keyword id="KW-0812">Transmembrane</keyword>
<keyword id="KW-1133">Transmembrane helix</keyword>
<organism>
    <name type="scientific">Macaca mulatta</name>
    <name type="common">Rhesus macaque</name>
    <dbReference type="NCBI Taxonomy" id="9544"/>
    <lineage>
        <taxon>Eukaryota</taxon>
        <taxon>Metazoa</taxon>
        <taxon>Chordata</taxon>
        <taxon>Craniata</taxon>
        <taxon>Vertebrata</taxon>
        <taxon>Euteleostomi</taxon>
        <taxon>Mammalia</taxon>
        <taxon>Eutheria</taxon>
        <taxon>Euarchontoglires</taxon>
        <taxon>Primates</taxon>
        <taxon>Haplorrhini</taxon>
        <taxon>Catarrhini</taxon>
        <taxon>Cercopithecidae</taxon>
        <taxon>Cercopithecinae</taxon>
        <taxon>Macaca</taxon>
    </lineage>
</organism>